<gene>
    <name evidence="1" type="primary">glpK</name>
    <name type="ordered locus">Nham_0360</name>
</gene>
<accession>Q1QR91</accession>
<sequence length="503" mass="53996">MVTHVLAIDQGTTSSRAILFRADTSIAAIAQQEFPQHFPASGWVEHEPEDIWTSTVATCREAMNKAGVTPKDIAAIGITNQRETTVVWDRATGQAMHRAVVWQDRRTADICARLKAEGHEPAISAKTGLIVDPYFSGTKIAWILDSVPGARARASRGDLLFGTVDCYLLWRLTGGKVHATDATNASRTLLFDIHTGQWDEELLKILRVPRAMLPEVKDSSAHFGDSVADLFGAPISIRGIAGDQQAAVVGQACFAPGMIKSTYGTGCFALLNTGATPVASKNKLLTTIAYQLNGKRTYALEGSIFVAGSAVQWLRDGLGLIKQASETGPLADRSDATQSVYLVPAFVGMGAPYWNPNVRGALFGLTRNTGPAELAHAALESVCYQTFDLWAAMRADWPDAAAAHTVLRVDGGMTASDWTMQRLADLLDAPVDRPVIQETTALGAAYLAGLSAGVYPEPSKFADNWRLERRFKPAMSAATRTRKLKGWAAAVRGVLASDGGEGR</sequence>
<feature type="chain" id="PRO_1000020752" description="Glycerol kinase">
    <location>
        <begin position="1"/>
        <end position="503"/>
    </location>
</feature>
<feature type="binding site" evidence="1">
    <location>
        <position position="12"/>
    </location>
    <ligand>
        <name>ADP</name>
        <dbReference type="ChEBI" id="CHEBI:456216"/>
    </ligand>
</feature>
<feature type="binding site" evidence="1">
    <location>
        <position position="12"/>
    </location>
    <ligand>
        <name>ATP</name>
        <dbReference type="ChEBI" id="CHEBI:30616"/>
    </ligand>
</feature>
<feature type="binding site" evidence="1">
    <location>
        <position position="12"/>
    </location>
    <ligand>
        <name>sn-glycerol 3-phosphate</name>
        <dbReference type="ChEBI" id="CHEBI:57597"/>
    </ligand>
</feature>
<feature type="binding site" evidence="1">
    <location>
        <position position="13"/>
    </location>
    <ligand>
        <name>ATP</name>
        <dbReference type="ChEBI" id="CHEBI:30616"/>
    </ligand>
</feature>
<feature type="binding site" evidence="1">
    <location>
        <position position="14"/>
    </location>
    <ligand>
        <name>ATP</name>
        <dbReference type="ChEBI" id="CHEBI:30616"/>
    </ligand>
</feature>
<feature type="binding site" evidence="1">
    <location>
        <position position="16"/>
    </location>
    <ligand>
        <name>ADP</name>
        <dbReference type="ChEBI" id="CHEBI:456216"/>
    </ligand>
</feature>
<feature type="binding site" evidence="1">
    <location>
        <position position="82"/>
    </location>
    <ligand>
        <name>glycerol</name>
        <dbReference type="ChEBI" id="CHEBI:17754"/>
    </ligand>
</feature>
<feature type="binding site" evidence="1">
    <location>
        <position position="82"/>
    </location>
    <ligand>
        <name>sn-glycerol 3-phosphate</name>
        <dbReference type="ChEBI" id="CHEBI:57597"/>
    </ligand>
</feature>
<feature type="binding site" evidence="1">
    <location>
        <position position="83"/>
    </location>
    <ligand>
        <name>glycerol</name>
        <dbReference type="ChEBI" id="CHEBI:17754"/>
    </ligand>
</feature>
<feature type="binding site" evidence="1">
    <location>
        <position position="83"/>
    </location>
    <ligand>
        <name>sn-glycerol 3-phosphate</name>
        <dbReference type="ChEBI" id="CHEBI:57597"/>
    </ligand>
</feature>
<feature type="binding site" evidence="1">
    <location>
        <position position="134"/>
    </location>
    <ligand>
        <name>glycerol</name>
        <dbReference type="ChEBI" id="CHEBI:17754"/>
    </ligand>
</feature>
<feature type="binding site" evidence="1">
    <location>
        <position position="134"/>
    </location>
    <ligand>
        <name>sn-glycerol 3-phosphate</name>
        <dbReference type="ChEBI" id="CHEBI:57597"/>
    </ligand>
</feature>
<feature type="binding site" evidence="1">
    <location>
        <position position="243"/>
    </location>
    <ligand>
        <name>glycerol</name>
        <dbReference type="ChEBI" id="CHEBI:17754"/>
    </ligand>
</feature>
<feature type="binding site" evidence="1">
    <location>
        <position position="243"/>
    </location>
    <ligand>
        <name>sn-glycerol 3-phosphate</name>
        <dbReference type="ChEBI" id="CHEBI:57597"/>
    </ligand>
</feature>
<feature type="binding site" evidence="1">
    <location>
        <position position="244"/>
    </location>
    <ligand>
        <name>glycerol</name>
        <dbReference type="ChEBI" id="CHEBI:17754"/>
    </ligand>
</feature>
<feature type="binding site" evidence="1">
    <location>
        <position position="265"/>
    </location>
    <ligand>
        <name>ADP</name>
        <dbReference type="ChEBI" id="CHEBI:456216"/>
    </ligand>
</feature>
<feature type="binding site" evidence="1">
    <location>
        <position position="265"/>
    </location>
    <ligand>
        <name>ATP</name>
        <dbReference type="ChEBI" id="CHEBI:30616"/>
    </ligand>
</feature>
<feature type="binding site" evidence="1">
    <location>
        <position position="308"/>
    </location>
    <ligand>
        <name>ADP</name>
        <dbReference type="ChEBI" id="CHEBI:456216"/>
    </ligand>
</feature>
<feature type="binding site" evidence="1">
    <location>
        <position position="308"/>
    </location>
    <ligand>
        <name>ATP</name>
        <dbReference type="ChEBI" id="CHEBI:30616"/>
    </ligand>
</feature>
<feature type="binding site" evidence="1">
    <location>
        <position position="312"/>
    </location>
    <ligand>
        <name>ATP</name>
        <dbReference type="ChEBI" id="CHEBI:30616"/>
    </ligand>
</feature>
<feature type="binding site" evidence="1">
    <location>
        <position position="412"/>
    </location>
    <ligand>
        <name>ADP</name>
        <dbReference type="ChEBI" id="CHEBI:456216"/>
    </ligand>
</feature>
<feature type="binding site" evidence="1">
    <location>
        <position position="412"/>
    </location>
    <ligand>
        <name>ATP</name>
        <dbReference type="ChEBI" id="CHEBI:30616"/>
    </ligand>
</feature>
<keyword id="KW-0067">ATP-binding</keyword>
<keyword id="KW-0319">Glycerol metabolism</keyword>
<keyword id="KW-0418">Kinase</keyword>
<keyword id="KW-0547">Nucleotide-binding</keyword>
<keyword id="KW-1185">Reference proteome</keyword>
<keyword id="KW-0808">Transferase</keyword>
<organism>
    <name type="scientific">Nitrobacter hamburgensis (strain DSM 10229 / NCIMB 13809 / X14)</name>
    <dbReference type="NCBI Taxonomy" id="323097"/>
    <lineage>
        <taxon>Bacteria</taxon>
        <taxon>Pseudomonadati</taxon>
        <taxon>Pseudomonadota</taxon>
        <taxon>Alphaproteobacteria</taxon>
        <taxon>Hyphomicrobiales</taxon>
        <taxon>Nitrobacteraceae</taxon>
        <taxon>Nitrobacter</taxon>
    </lineage>
</organism>
<evidence type="ECO:0000255" key="1">
    <source>
        <dbReference type="HAMAP-Rule" id="MF_00186"/>
    </source>
</evidence>
<protein>
    <recommendedName>
        <fullName evidence="1">Glycerol kinase</fullName>
        <ecNumber evidence="1">2.7.1.30</ecNumber>
    </recommendedName>
    <alternativeName>
        <fullName evidence="1">ATP:glycerol 3-phosphotransferase</fullName>
    </alternativeName>
    <alternativeName>
        <fullName evidence="1">Glycerokinase</fullName>
        <shortName evidence="1">GK</shortName>
    </alternativeName>
</protein>
<name>GLPK_NITHX</name>
<comment type="function">
    <text evidence="1">Key enzyme in the regulation of glycerol uptake and metabolism. Catalyzes the phosphorylation of glycerol to yield sn-glycerol 3-phosphate.</text>
</comment>
<comment type="catalytic activity">
    <reaction evidence="1">
        <text>glycerol + ATP = sn-glycerol 3-phosphate + ADP + H(+)</text>
        <dbReference type="Rhea" id="RHEA:21644"/>
        <dbReference type="ChEBI" id="CHEBI:15378"/>
        <dbReference type="ChEBI" id="CHEBI:17754"/>
        <dbReference type="ChEBI" id="CHEBI:30616"/>
        <dbReference type="ChEBI" id="CHEBI:57597"/>
        <dbReference type="ChEBI" id="CHEBI:456216"/>
        <dbReference type="EC" id="2.7.1.30"/>
    </reaction>
</comment>
<comment type="activity regulation">
    <text evidence="1">Inhibited by fructose 1,6-bisphosphate (FBP).</text>
</comment>
<comment type="pathway">
    <text evidence="1">Polyol metabolism; glycerol degradation via glycerol kinase pathway; sn-glycerol 3-phosphate from glycerol: step 1/1.</text>
</comment>
<comment type="similarity">
    <text evidence="1">Belongs to the FGGY kinase family.</text>
</comment>
<proteinExistence type="inferred from homology"/>
<reference key="1">
    <citation type="submission" date="2006-03" db="EMBL/GenBank/DDBJ databases">
        <title>Complete sequence of chromosome of Nitrobacter hamburgensis X14.</title>
        <authorList>
            <consortium name="US DOE Joint Genome Institute"/>
            <person name="Copeland A."/>
            <person name="Lucas S."/>
            <person name="Lapidus A."/>
            <person name="Barry K."/>
            <person name="Detter J.C."/>
            <person name="Glavina del Rio T."/>
            <person name="Hammon N."/>
            <person name="Israni S."/>
            <person name="Dalin E."/>
            <person name="Tice H."/>
            <person name="Pitluck S."/>
            <person name="Chain P."/>
            <person name="Malfatti S."/>
            <person name="Shin M."/>
            <person name="Vergez L."/>
            <person name="Schmutz J."/>
            <person name="Larimer F."/>
            <person name="Land M."/>
            <person name="Hauser L."/>
            <person name="Kyrpides N."/>
            <person name="Ivanova N."/>
            <person name="Ward B."/>
            <person name="Arp D."/>
            <person name="Klotz M."/>
            <person name="Stein L."/>
            <person name="O'Mullan G."/>
            <person name="Starkenburg S."/>
            <person name="Sayavedra L."/>
            <person name="Poret-Peterson A.T."/>
            <person name="Gentry M.E."/>
            <person name="Bruce D."/>
            <person name="Richardson P."/>
        </authorList>
    </citation>
    <scope>NUCLEOTIDE SEQUENCE [LARGE SCALE GENOMIC DNA]</scope>
    <source>
        <strain>DSM 10229 / NCIMB 13809 / X14</strain>
    </source>
</reference>
<dbReference type="EC" id="2.7.1.30" evidence="1"/>
<dbReference type="EMBL" id="CP000319">
    <property type="protein sequence ID" value="ABE61256.1"/>
    <property type="molecule type" value="Genomic_DNA"/>
</dbReference>
<dbReference type="RefSeq" id="WP_011508960.1">
    <property type="nucleotide sequence ID" value="NC_007964.1"/>
</dbReference>
<dbReference type="SMR" id="Q1QR91"/>
<dbReference type="STRING" id="323097.Nham_0360"/>
<dbReference type="KEGG" id="nha:Nham_0360"/>
<dbReference type="eggNOG" id="COG0554">
    <property type="taxonomic scope" value="Bacteria"/>
</dbReference>
<dbReference type="HOGENOM" id="CLU_009281_2_3_5"/>
<dbReference type="OrthoDB" id="9805576at2"/>
<dbReference type="UniPathway" id="UPA00618">
    <property type="reaction ID" value="UER00672"/>
</dbReference>
<dbReference type="Proteomes" id="UP000001953">
    <property type="component" value="Chromosome"/>
</dbReference>
<dbReference type="GO" id="GO:0005829">
    <property type="term" value="C:cytosol"/>
    <property type="evidence" value="ECO:0007669"/>
    <property type="project" value="TreeGrafter"/>
</dbReference>
<dbReference type="GO" id="GO:0005524">
    <property type="term" value="F:ATP binding"/>
    <property type="evidence" value="ECO:0007669"/>
    <property type="project" value="UniProtKB-UniRule"/>
</dbReference>
<dbReference type="GO" id="GO:0004370">
    <property type="term" value="F:glycerol kinase activity"/>
    <property type="evidence" value="ECO:0000250"/>
    <property type="project" value="UniProtKB"/>
</dbReference>
<dbReference type="GO" id="GO:0019563">
    <property type="term" value="P:glycerol catabolic process"/>
    <property type="evidence" value="ECO:0007669"/>
    <property type="project" value="UniProtKB-UniRule"/>
</dbReference>
<dbReference type="GO" id="GO:0006071">
    <property type="term" value="P:glycerol metabolic process"/>
    <property type="evidence" value="ECO:0000250"/>
    <property type="project" value="UniProtKB"/>
</dbReference>
<dbReference type="GO" id="GO:0006072">
    <property type="term" value="P:glycerol-3-phosphate metabolic process"/>
    <property type="evidence" value="ECO:0007669"/>
    <property type="project" value="InterPro"/>
</dbReference>
<dbReference type="CDD" id="cd07786">
    <property type="entry name" value="FGGY_EcGK_like"/>
    <property type="match status" value="1"/>
</dbReference>
<dbReference type="FunFam" id="3.30.420.40:FF:000007">
    <property type="entry name" value="Glycerol kinase"/>
    <property type="match status" value="1"/>
</dbReference>
<dbReference type="FunFam" id="3.30.420.40:FF:000008">
    <property type="entry name" value="Glycerol kinase"/>
    <property type="match status" value="1"/>
</dbReference>
<dbReference type="Gene3D" id="3.30.420.40">
    <property type="match status" value="2"/>
</dbReference>
<dbReference type="HAMAP" id="MF_00186">
    <property type="entry name" value="Glycerol_kin"/>
    <property type="match status" value="1"/>
</dbReference>
<dbReference type="InterPro" id="IPR043129">
    <property type="entry name" value="ATPase_NBD"/>
</dbReference>
<dbReference type="InterPro" id="IPR000577">
    <property type="entry name" value="Carb_kinase_FGGY"/>
</dbReference>
<dbReference type="InterPro" id="IPR018483">
    <property type="entry name" value="Carb_kinase_FGGY_CS"/>
</dbReference>
<dbReference type="InterPro" id="IPR018485">
    <property type="entry name" value="FGGY_C"/>
</dbReference>
<dbReference type="InterPro" id="IPR018484">
    <property type="entry name" value="FGGY_N"/>
</dbReference>
<dbReference type="InterPro" id="IPR005999">
    <property type="entry name" value="Glycerol_kin"/>
</dbReference>
<dbReference type="NCBIfam" id="TIGR01311">
    <property type="entry name" value="glycerol_kin"/>
    <property type="match status" value="1"/>
</dbReference>
<dbReference type="NCBIfam" id="NF000756">
    <property type="entry name" value="PRK00047.1"/>
    <property type="match status" value="1"/>
</dbReference>
<dbReference type="PANTHER" id="PTHR10196:SF78">
    <property type="entry name" value="GLYCEROL KINASE"/>
    <property type="match status" value="1"/>
</dbReference>
<dbReference type="PANTHER" id="PTHR10196">
    <property type="entry name" value="SUGAR KINASE"/>
    <property type="match status" value="1"/>
</dbReference>
<dbReference type="Pfam" id="PF02782">
    <property type="entry name" value="FGGY_C"/>
    <property type="match status" value="1"/>
</dbReference>
<dbReference type="Pfam" id="PF00370">
    <property type="entry name" value="FGGY_N"/>
    <property type="match status" value="1"/>
</dbReference>
<dbReference type="PIRSF" id="PIRSF000538">
    <property type="entry name" value="GlpK"/>
    <property type="match status" value="1"/>
</dbReference>
<dbReference type="SUPFAM" id="SSF53067">
    <property type="entry name" value="Actin-like ATPase domain"/>
    <property type="match status" value="2"/>
</dbReference>
<dbReference type="PROSITE" id="PS00445">
    <property type="entry name" value="FGGY_KINASES_2"/>
    <property type="match status" value="1"/>
</dbReference>